<protein>
    <recommendedName>
        <fullName evidence="1">Probable endonuclease 4</fullName>
        <ecNumber evidence="1">3.1.21.2</ecNumber>
    </recommendedName>
    <alternativeName>
        <fullName evidence="1">Endodeoxyribonuclease IV</fullName>
    </alternativeName>
    <alternativeName>
        <fullName evidence="1">Endonuclease IV</fullName>
    </alternativeName>
</protein>
<sequence>MPEIGAHVSAAGGPQRAPERGGEIGCDCMQLFTRNQRSWKVKPIAPGEADAFRRARAEHGIGAVMSHASYLINLAATDPEKHAKSQTALEAELERCHQLGIELLNFHPGAHLEAGIEAGIETIAATLNAICRNHPDKTDVCLVLENVAGQGSTVGADFAELAAILERLETPERFGVCVDTAHAFAAGYELHTAAGWDAMWAAFDDHIGLNRLVALHLNDSRPPCGSRKDRHALIGRGEIGPEAFRRAVTDPRTASLPQMLETPAGPEGWAQEIDWLRGCAQGNQPDLPEIEDRNINL</sequence>
<gene>
    <name evidence="1" type="primary">nfo</name>
    <name type="ordered locus">Hhal_1668</name>
</gene>
<proteinExistence type="inferred from homology"/>
<organism>
    <name type="scientific">Halorhodospira halophila (strain DSM 244 / SL1)</name>
    <name type="common">Ectothiorhodospira halophila (strain DSM 244 / SL1)</name>
    <dbReference type="NCBI Taxonomy" id="349124"/>
    <lineage>
        <taxon>Bacteria</taxon>
        <taxon>Pseudomonadati</taxon>
        <taxon>Pseudomonadota</taxon>
        <taxon>Gammaproteobacteria</taxon>
        <taxon>Chromatiales</taxon>
        <taxon>Ectothiorhodospiraceae</taxon>
        <taxon>Halorhodospira</taxon>
    </lineage>
</organism>
<feature type="chain" id="PRO_1000058177" description="Probable endonuclease 4">
    <location>
        <begin position="1"/>
        <end position="297"/>
    </location>
</feature>
<feature type="region of interest" description="Disordered" evidence="2">
    <location>
        <begin position="1"/>
        <end position="21"/>
    </location>
</feature>
<feature type="binding site" evidence="1">
    <location>
        <position position="67"/>
    </location>
    <ligand>
        <name>Zn(2+)</name>
        <dbReference type="ChEBI" id="CHEBI:29105"/>
        <label>1</label>
    </ligand>
</feature>
<feature type="binding site" evidence="1">
    <location>
        <position position="107"/>
    </location>
    <ligand>
        <name>Zn(2+)</name>
        <dbReference type="ChEBI" id="CHEBI:29105"/>
        <label>1</label>
    </ligand>
</feature>
<feature type="binding site" evidence="1">
    <location>
        <position position="145"/>
    </location>
    <ligand>
        <name>Zn(2+)</name>
        <dbReference type="ChEBI" id="CHEBI:29105"/>
        <label>1</label>
    </ligand>
</feature>
<feature type="binding site" evidence="1">
    <location>
        <position position="145"/>
    </location>
    <ligand>
        <name>Zn(2+)</name>
        <dbReference type="ChEBI" id="CHEBI:29105"/>
        <label>2</label>
    </ligand>
</feature>
<feature type="binding site" evidence="1">
    <location>
        <position position="179"/>
    </location>
    <ligand>
        <name>Zn(2+)</name>
        <dbReference type="ChEBI" id="CHEBI:29105"/>
        <label>2</label>
    </ligand>
</feature>
<feature type="binding site" evidence="1">
    <location>
        <position position="182"/>
    </location>
    <ligand>
        <name>Zn(2+)</name>
        <dbReference type="ChEBI" id="CHEBI:29105"/>
        <label>3</label>
    </ligand>
</feature>
<feature type="binding site" evidence="1">
    <location>
        <position position="216"/>
    </location>
    <ligand>
        <name>Zn(2+)</name>
        <dbReference type="ChEBI" id="CHEBI:29105"/>
        <label>2</label>
    </ligand>
</feature>
<feature type="binding site" evidence="1">
    <location>
        <position position="229"/>
    </location>
    <ligand>
        <name>Zn(2+)</name>
        <dbReference type="ChEBI" id="CHEBI:29105"/>
        <label>3</label>
    </ligand>
</feature>
<feature type="binding site" evidence="1">
    <location>
        <position position="231"/>
    </location>
    <ligand>
        <name>Zn(2+)</name>
        <dbReference type="ChEBI" id="CHEBI:29105"/>
        <label>3</label>
    </ligand>
</feature>
<feature type="binding site" evidence="1">
    <location>
        <position position="261"/>
    </location>
    <ligand>
        <name>Zn(2+)</name>
        <dbReference type="ChEBI" id="CHEBI:29105"/>
        <label>2</label>
    </ligand>
</feature>
<keyword id="KW-0227">DNA damage</keyword>
<keyword id="KW-0234">DNA repair</keyword>
<keyword id="KW-0255">Endonuclease</keyword>
<keyword id="KW-0378">Hydrolase</keyword>
<keyword id="KW-0479">Metal-binding</keyword>
<keyword id="KW-0540">Nuclease</keyword>
<keyword id="KW-1185">Reference proteome</keyword>
<keyword id="KW-0862">Zinc</keyword>
<name>END4_HALHL</name>
<reference key="1">
    <citation type="submission" date="2006-12" db="EMBL/GenBank/DDBJ databases">
        <title>Complete sequence of Halorhodospira halophila SL1.</title>
        <authorList>
            <consortium name="US DOE Joint Genome Institute"/>
            <person name="Copeland A."/>
            <person name="Lucas S."/>
            <person name="Lapidus A."/>
            <person name="Barry K."/>
            <person name="Detter J.C."/>
            <person name="Glavina del Rio T."/>
            <person name="Hammon N."/>
            <person name="Israni S."/>
            <person name="Dalin E."/>
            <person name="Tice H."/>
            <person name="Pitluck S."/>
            <person name="Saunders E."/>
            <person name="Brettin T."/>
            <person name="Bruce D."/>
            <person name="Han C."/>
            <person name="Tapia R."/>
            <person name="Schmutz J."/>
            <person name="Larimer F."/>
            <person name="Land M."/>
            <person name="Hauser L."/>
            <person name="Kyrpides N."/>
            <person name="Mikhailova N."/>
            <person name="Hoff W."/>
            <person name="Richardson P."/>
        </authorList>
    </citation>
    <scope>NUCLEOTIDE SEQUENCE [LARGE SCALE GENOMIC DNA]</scope>
    <source>
        <strain>DSM 244 / SL1</strain>
    </source>
</reference>
<accession>A1WXM0</accession>
<dbReference type="EC" id="3.1.21.2" evidence="1"/>
<dbReference type="EMBL" id="CP000544">
    <property type="protein sequence ID" value="ABM62432.1"/>
    <property type="molecule type" value="Genomic_DNA"/>
</dbReference>
<dbReference type="RefSeq" id="WP_011814454.1">
    <property type="nucleotide sequence ID" value="NC_008789.1"/>
</dbReference>
<dbReference type="SMR" id="A1WXM0"/>
<dbReference type="STRING" id="349124.Hhal_1668"/>
<dbReference type="KEGG" id="hha:Hhal_1668"/>
<dbReference type="eggNOG" id="COG0648">
    <property type="taxonomic scope" value="Bacteria"/>
</dbReference>
<dbReference type="HOGENOM" id="CLU_025885_0_1_6"/>
<dbReference type="OrthoDB" id="9805666at2"/>
<dbReference type="Proteomes" id="UP000000647">
    <property type="component" value="Chromosome"/>
</dbReference>
<dbReference type="GO" id="GO:0008833">
    <property type="term" value="F:deoxyribonuclease IV (phage-T4-induced) activity"/>
    <property type="evidence" value="ECO:0007669"/>
    <property type="project" value="UniProtKB-UniRule"/>
</dbReference>
<dbReference type="GO" id="GO:0003677">
    <property type="term" value="F:DNA binding"/>
    <property type="evidence" value="ECO:0007669"/>
    <property type="project" value="InterPro"/>
</dbReference>
<dbReference type="GO" id="GO:0003906">
    <property type="term" value="F:DNA-(apurinic or apyrimidinic site) endonuclease activity"/>
    <property type="evidence" value="ECO:0007669"/>
    <property type="project" value="TreeGrafter"/>
</dbReference>
<dbReference type="GO" id="GO:0008081">
    <property type="term" value="F:phosphoric diester hydrolase activity"/>
    <property type="evidence" value="ECO:0007669"/>
    <property type="project" value="TreeGrafter"/>
</dbReference>
<dbReference type="GO" id="GO:0008270">
    <property type="term" value="F:zinc ion binding"/>
    <property type="evidence" value="ECO:0007669"/>
    <property type="project" value="UniProtKB-UniRule"/>
</dbReference>
<dbReference type="GO" id="GO:0006284">
    <property type="term" value="P:base-excision repair"/>
    <property type="evidence" value="ECO:0007669"/>
    <property type="project" value="TreeGrafter"/>
</dbReference>
<dbReference type="CDD" id="cd00019">
    <property type="entry name" value="AP2Ec"/>
    <property type="match status" value="1"/>
</dbReference>
<dbReference type="FunFam" id="3.20.20.150:FF:000001">
    <property type="entry name" value="Probable endonuclease 4"/>
    <property type="match status" value="1"/>
</dbReference>
<dbReference type="Gene3D" id="3.20.20.150">
    <property type="entry name" value="Divalent-metal-dependent TIM barrel enzymes"/>
    <property type="match status" value="1"/>
</dbReference>
<dbReference type="HAMAP" id="MF_00152">
    <property type="entry name" value="Nfo"/>
    <property type="match status" value="1"/>
</dbReference>
<dbReference type="InterPro" id="IPR001719">
    <property type="entry name" value="AP_endonuc_2"/>
</dbReference>
<dbReference type="InterPro" id="IPR018246">
    <property type="entry name" value="AP_endonuc_F2_Zn_BS"/>
</dbReference>
<dbReference type="InterPro" id="IPR036237">
    <property type="entry name" value="Xyl_isomerase-like_sf"/>
</dbReference>
<dbReference type="InterPro" id="IPR013022">
    <property type="entry name" value="Xyl_isomerase-like_TIM-brl"/>
</dbReference>
<dbReference type="NCBIfam" id="TIGR00587">
    <property type="entry name" value="nfo"/>
    <property type="match status" value="1"/>
</dbReference>
<dbReference type="NCBIfam" id="NF002197">
    <property type="entry name" value="PRK01060.1-2"/>
    <property type="match status" value="1"/>
</dbReference>
<dbReference type="PANTHER" id="PTHR21445:SF0">
    <property type="entry name" value="APURINIC-APYRIMIDINIC ENDONUCLEASE"/>
    <property type="match status" value="1"/>
</dbReference>
<dbReference type="PANTHER" id="PTHR21445">
    <property type="entry name" value="ENDONUCLEASE IV ENDODEOXYRIBONUCLEASE IV"/>
    <property type="match status" value="1"/>
</dbReference>
<dbReference type="Pfam" id="PF01261">
    <property type="entry name" value="AP_endonuc_2"/>
    <property type="match status" value="1"/>
</dbReference>
<dbReference type="SMART" id="SM00518">
    <property type="entry name" value="AP2Ec"/>
    <property type="match status" value="1"/>
</dbReference>
<dbReference type="SUPFAM" id="SSF51658">
    <property type="entry name" value="Xylose isomerase-like"/>
    <property type="match status" value="1"/>
</dbReference>
<dbReference type="PROSITE" id="PS00729">
    <property type="entry name" value="AP_NUCLEASE_F2_1"/>
    <property type="match status" value="1"/>
</dbReference>
<dbReference type="PROSITE" id="PS00731">
    <property type="entry name" value="AP_NUCLEASE_F2_3"/>
    <property type="match status" value="1"/>
</dbReference>
<dbReference type="PROSITE" id="PS51432">
    <property type="entry name" value="AP_NUCLEASE_F2_4"/>
    <property type="match status" value="1"/>
</dbReference>
<comment type="function">
    <text evidence="1">Endonuclease IV plays a role in DNA repair. It cleaves phosphodiester bonds at apurinic or apyrimidinic (AP) sites, generating a 3'-hydroxyl group and a 5'-terminal sugar phosphate.</text>
</comment>
<comment type="catalytic activity">
    <reaction evidence="1">
        <text>Endonucleolytic cleavage to 5'-phosphooligonucleotide end-products.</text>
        <dbReference type="EC" id="3.1.21.2"/>
    </reaction>
</comment>
<comment type="cofactor">
    <cofactor evidence="1">
        <name>Zn(2+)</name>
        <dbReference type="ChEBI" id="CHEBI:29105"/>
    </cofactor>
    <text evidence="1">Binds 3 Zn(2+) ions.</text>
</comment>
<comment type="similarity">
    <text evidence="1">Belongs to the AP endonuclease 2 family.</text>
</comment>
<evidence type="ECO:0000255" key="1">
    <source>
        <dbReference type="HAMAP-Rule" id="MF_00152"/>
    </source>
</evidence>
<evidence type="ECO:0000256" key="2">
    <source>
        <dbReference type="SAM" id="MobiDB-lite"/>
    </source>
</evidence>